<organism>
    <name type="scientific">Clostridioides difficile</name>
    <name type="common">Peptoclostridium difficile</name>
    <dbReference type="NCBI Taxonomy" id="1496"/>
    <lineage>
        <taxon>Bacteria</taxon>
        <taxon>Bacillati</taxon>
        <taxon>Bacillota</taxon>
        <taxon>Clostridia</taxon>
        <taxon>Peptostreptococcales</taxon>
        <taxon>Peptostreptococcaceae</taxon>
        <taxon>Clostridioides</taxon>
    </lineage>
</organism>
<keyword id="KW-0010">Activator</keyword>
<keyword id="KW-0106">Calcium</keyword>
<keyword id="KW-0963">Cytoplasm</keyword>
<keyword id="KW-0238">DNA-binding</keyword>
<keyword id="KW-0479">Metal-binding</keyword>
<keyword id="KW-0597">Phosphoprotein</keyword>
<keyword id="KW-0678">Repressor</keyword>
<keyword id="KW-0749">Sporulation</keyword>
<keyword id="KW-0804">Transcription</keyword>
<keyword id="KW-0805">Transcription regulation</keyword>
<keyword id="KW-0902">Two-component regulatory system</keyword>
<comment type="function">
    <text evidence="1">May play the central regulatory role in sporulation. It may be an element of the effector pathway responsible for the activation of sporulation genes in response to nutritional stress. Spo0A may act in concert with spo0H (a sigma factor) to control the expression of some genes that are critical to the sporulation process (By similarity).</text>
</comment>
<comment type="cofactor">
    <cofactor evidence="1">
        <name>Ca(2+)</name>
        <dbReference type="ChEBI" id="CHEBI:29108"/>
    </cofactor>
    <text evidence="1">Binds 1 Ca(2+) ion per subunit.</text>
</comment>
<comment type="subcellular location">
    <subcellularLocation>
        <location evidence="4">Cytoplasm</location>
    </subcellularLocation>
</comment>
<reference key="1">
    <citation type="submission" date="1995-12" db="EMBL/GenBank/DDBJ databases">
        <authorList>
            <person name="Putland R.A."/>
        </authorList>
    </citation>
    <scope>NUCLEOTIDE SEQUENCE [GENOMIC DNA]</scope>
    <source>
        <strain>ATCC 9689 / DSM 1296 / BCRC 10642 / JCM 1296 / NCIMB 10666 / NCTC 11209 / 90556-M6S</strain>
    </source>
</reference>
<reference key="2">
    <citation type="submission" date="1995-10" db="EMBL/GenBank/DDBJ databases">
        <authorList>
            <person name="Putland R.A."/>
            <person name="Grove D.I."/>
        </authorList>
    </citation>
    <scope>NUCLEOTIDE SEQUENCE [GENOMIC DNA] OF 70-223</scope>
    <source>
        <strain>ATCC 9689 / DSM 1296 / BCRC 10642 / JCM 1296 / NCIMB 10666 / NCTC 11209 / 90556-M6S</strain>
    </source>
</reference>
<dbReference type="EMBL" id="U43514">
    <property type="protein sequence ID" value="AAB05561.1"/>
    <property type="molecule type" value="Genomic_DNA"/>
</dbReference>
<dbReference type="EMBL" id="X94328">
    <property type="protein sequence ID" value="CAA63989.1"/>
    <property type="molecule type" value="Genomic_DNA"/>
</dbReference>
<dbReference type="EMBL" id="U36481">
    <property type="protein sequence ID" value="AAA79509.1"/>
    <property type="molecule type" value="Genomic_DNA"/>
</dbReference>
<dbReference type="RefSeq" id="WP_032509222.1">
    <property type="nucleotide sequence ID" value="NZ_JALGRY010000106.1"/>
</dbReference>
<dbReference type="SMR" id="P52938"/>
<dbReference type="GO" id="GO:0005829">
    <property type="term" value="C:cytosol"/>
    <property type="evidence" value="ECO:0007669"/>
    <property type="project" value="TreeGrafter"/>
</dbReference>
<dbReference type="GO" id="GO:0032993">
    <property type="term" value="C:protein-DNA complex"/>
    <property type="evidence" value="ECO:0007669"/>
    <property type="project" value="TreeGrafter"/>
</dbReference>
<dbReference type="GO" id="GO:0005509">
    <property type="term" value="F:calcium ion binding"/>
    <property type="evidence" value="ECO:0007669"/>
    <property type="project" value="InterPro"/>
</dbReference>
<dbReference type="GO" id="GO:0003700">
    <property type="term" value="F:DNA-binding transcription factor activity"/>
    <property type="evidence" value="ECO:0007669"/>
    <property type="project" value="InterPro"/>
</dbReference>
<dbReference type="GO" id="GO:0000156">
    <property type="term" value="F:phosphorelay response regulator activity"/>
    <property type="evidence" value="ECO:0007669"/>
    <property type="project" value="TreeGrafter"/>
</dbReference>
<dbReference type="GO" id="GO:0000976">
    <property type="term" value="F:transcription cis-regulatory region binding"/>
    <property type="evidence" value="ECO:0007669"/>
    <property type="project" value="TreeGrafter"/>
</dbReference>
<dbReference type="GO" id="GO:0051606">
    <property type="term" value="P:detection of stimulus"/>
    <property type="evidence" value="ECO:0007669"/>
    <property type="project" value="InterPro"/>
</dbReference>
<dbReference type="GO" id="GO:0042173">
    <property type="term" value="P:regulation of sporulation resulting in formation of a cellular spore"/>
    <property type="evidence" value="ECO:0007669"/>
    <property type="project" value="InterPro"/>
</dbReference>
<dbReference type="GO" id="GO:0030435">
    <property type="term" value="P:sporulation resulting in formation of a cellular spore"/>
    <property type="evidence" value="ECO:0007669"/>
    <property type="project" value="UniProtKB-KW"/>
</dbReference>
<dbReference type="CDD" id="cd17561">
    <property type="entry name" value="REC_Spo0A"/>
    <property type="match status" value="1"/>
</dbReference>
<dbReference type="FunFam" id="3.40.50.2300:FF:000154">
    <property type="entry name" value="Stage 0 sporulation protein A"/>
    <property type="match status" value="1"/>
</dbReference>
<dbReference type="Gene3D" id="3.40.50.2300">
    <property type="match status" value="1"/>
</dbReference>
<dbReference type="Gene3D" id="1.10.10.10">
    <property type="entry name" value="Winged helix-like DNA-binding domain superfamily/Winged helix DNA-binding domain"/>
    <property type="match status" value="1"/>
</dbReference>
<dbReference type="InterPro" id="IPR011006">
    <property type="entry name" value="CheY-like_superfamily"/>
</dbReference>
<dbReference type="InterPro" id="IPR016032">
    <property type="entry name" value="Sig_transdc_resp-reg_C-effctor"/>
</dbReference>
<dbReference type="InterPro" id="IPR001789">
    <property type="entry name" value="Sig_transdc_resp-reg_receiver"/>
</dbReference>
<dbReference type="InterPro" id="IPR014879">
    <property type="entry name" value="Spo0A_C"/>
</dbReference>
<dbReference type="InterPro" id="IPR012052">
    <property type="entry name" value="Spore_0_A"/>
</dbReference>
<dbReference type="InterPro" id="IPR039420">
    <property type="entry name" value="WalR-like"/>
</dbReference>
<dbReference type="InterPro" id="IPR036388">
    <property type="entry name" value="WH-like_DNA-bd_sf"/>
</dbReference>
<dbReference type="NCBIfam" id="TIGR02875">
    <property type="entry name" value="spore_0_A"/>
    <property type="match status" value="1"/>
</dbReference>
<dbReference type="PANTHER" id="PTHR48111">
    <property type="entry name" value="REGULATOR OF RPOS"/>
    <property type="match status" value="1"/>
</dbReference>
<dbReference type="PANTHER" id="PTHR48111:SF1">
    <property type="entry name" value="TWO-COMPONENT RESPONSE REGULATOR ORR33"/>
    <property type="match status" value="1"/>
</dbReference>
<dbReference type="Pfam" id="PF00072">
    <property type="entry name" value="Response_reg"/>
    <property type="match status" value="1"/>
</dbReference>
<dbReference type="Pfam" id="PF08769">
    <property type="entry name" value="Spo0A_C"/>
    <property type="match status" value="1"/>
</dbReference>
<dbReference type="PIRSF" id="PIRSF002937">
    <property type="entry name" value="Res_reg_Spo0A"/>
    <property type="match status" value="1"/>
</dbReference>
<dbReference type="SMART" id="SM00448">
    <property type="entry name" value="REC"/>
    <property type="match status" value="1"/>
</dbReference>
<dbReference type="SUPFAM" id="SSF46894">
    <property type="entry name" value="C-terminal effector domain of the bipartite response regulators"/>
    <property type="match status" value="1"/>
</dbReference>
<dbReference type="SUPFAM" id="SSF52172">
    <property type="entry name" value="CheY-like"/>
    <property type="match status" value="1"/>
</dbReference>
<dbReference type="PROSITE" id="PS50110">
    <property type="entry name" value="RESPONSE_REGULATORY"/>
    <property type="match status" value="1"/>
</dbReference>
<evidence type="ECO:0000250" key="1"/>
<evidence type="ECO:0000255" key="2"/>
<evidence type="ECO:0000255" key="3">
    <source>
        <dbReference type="PROSITE-ProRule" id="PRU00169"/>
    </source>
</evidence>
<evidence type="ECO:0000305" key="4"/>
<gene>
    <name type="primary">spo0A</name>
</gene>
<feature type="chain" id="PRO_0000081240" description="Stage 0 sporulation protein A homolog">
    <location>
        <begin position="1"/>
        <end position="274"/>
    </location>
</feature>
<feature type="domain" description="Response regulatory" evidence="3">
    <location>
        <begin position="10"/>
        <end position="128"/>
    </location>
</feature>
<feature type="DNA-binding region" description="H-T-H motif" evidence="2">
    <location>
        <begin position="205"/>
        <end position="224"/>
    </location>
</feature>
<feature type="binding site" evidence="1">
    <location>
        <position position="15"/>
    </location>
    <ligand>
        <name>Ca(2+)</name>
        <dbReference type="ChEBI" id="CHEBI:29108"/>
    </ligand>
</feature>
<feature type="binding site" evidence="1">
    <location>
        <position position="16"/>
    </location>
    <ligand>
        <name>Ca(2+)</name>
        <dbReference type="ChEBI" id="CHEBI:29108"/>
    </ligand>
</feature>
<feature type="binding site" evidence="1">
    <location>
        <position position="61"/>
    </location>
    <ligand>
        <name>Ca(2+)</name>
        <dbReference type="ChEBI" id="CHEBI:29108"/>
    </ligand>
</feature>
<feature type="modified residue" description="4-aspartylphosphate" evidence="3">
    <location>
        <position position="61"/>
    </location>
</feature>
<name>SP0A_CLODI</name>
<accession>P52938</accession>
<sequence>MGGFLVEKIKIVLADDNKDFCQVLKEYLSNEDDIDILGIAKDGIEALDLVKKTQPDLLILDVIMPHLDGLGVIEKLNTMDIPKMPKIIVLSAVGQDKITQSAINLGADYYIVKPFDFVVFINRIRELVSNRVTQVEPKPRPVQETQMTRSDFVKNVGNIETEITNIIHEIGVPAHIKGYLYLREAMKMVIDNVELLGAVTKELYPSIAKKFNTTPSRVERAIRHAIEVAWSRGKVDTINQLFGYTVHNTKGKPTNSEFIAMIADKLRLEHSMVK</sequence>
<protein>
    <recommendedName>
        <fullName>Stage 0 sporulation protein A homolog</fullName>
    </recommendedName>
</protein>
<proteinExistence type="inferred from homology"/>